<reference key="1">
    <citation type="journal article" date="1992" name="J. Biol. Chem.">
        <title>The primary structure of omega-amino acid:pyruvate aminotransferase.</title>
        <authorList>
            <person name="Yonaha K."/>
            <person name="Nishie M."/>
            <person name="Aibara S."/>
        </authorList>
    </citation>
    <scope>PROTEIN SEQUENCE</scope>
    <scope>SUBUNIT</scope>
    <source>
        <strain>NBRC 14796 / NCIMB 13499 / F-126</strain>
    </source>
</reference>
<reference key="2">
    <citation type="journal article" date="1983" name="J. Biol. Chem.">
        <title>Properties of the bound coenzyme and subunit structure of omega-amino acid:pyruvate aminotransferase.</title>
        <authorList>
            <person name="Yonaha K."/>
            <person name="Toyama S."/>
            <person name="Kagamiyama H."/>
        </authorList>
    </citation>
    <scope>PROTEIN SEQUENCE OF 1-18 AND 285-292</scope>
    <scope>FUNCTION</scope>
    <scope>COFACTOR</scope>
    <scope>SUBUNIT</scope>
    <source>
        <strain>NBRC 14796 / NCIMB 13499 / F-126</strain>
    </source>
</reference>
<reference key="3">
    <citation type="journal article" date="1989" name="J. Biochem.">
        <title>Crystal structure analysis of omega-amino acid:pyruvate aminotransferase with a newly developed Weissenberg camera and an imaging plate using synchrotron radiation.</title>
        <authorList>
            <person name="Watanabe N."/>
            <person name="Sakabe K."/>
            <person name="Sakabe N."/>
            <person name="Higashi T."/>
            <person name="Sasaki K."/>
            <person name="Aibara S."/>
            <person name="Morita Y."/>
            <person name="Yonaha K."/>
            <person name="Toyama S."/>
            <person name="Fukutani H."/>
        </authorList>
    </citation>
    <scope>X-RAY CRYSTALLOGRAPHY (2.0 ANGSTROMS) IN COMPLEX WITH PYRIDOXAL PHOSPHATE</scope>
    <scope>COFACTOR</scope>
    <scope>SUBUNIT</scope>
</reference>
<sequence length="449" mass="48614">NMPEHAGASLASQLKLDAHWMPYTANRNFLRDPRLIVAAEGSWLVDDKGRKVYDSLSGLWTCGAGHTRKEIQEAVAKQLSTLDYSPGFQYGHPLSFQLAEKITDLTPGNLNHVFFTDSGSECALTAVKMVRAYWRLKGQATKTKMIGRARGYHGVNIAGTSLGGVNGNRKLFGQPMQDVDHLPHTLLASNAYSRGMPKEGGIALADELLKLIELHDASNIAAVFVEPLAGSAGVLVPPEGYLKRNREICNQHNILLVFDEVITGFGRTGSMFGADSFGVTPDLMCIAKQVTNGAIPMGAVIASTEIYQTFMNQPTPEYAVEFPHGYTYSAHPVACAAGLAALCLLQKENLVQSVAEVAPHFEKALHGIKGAKNVIDIRNFGLAGAIQIAPRDGDAIVRPFEAGMALWKAGFYVRFGGDTLQFGPTFNSKPQDLDRLFDAVGEVLNKLLD</sequence>
<organism>
    <name type="scientific">Pseudomonas putida</name>
    <name type="common">Arthrobacter siderocapsulatus</name>
    <dbReference type="NCBI Taxonomy" id="303"/>
    <lineage>
        <taxon>Bacteria</taxon>
        <taxon>Pseudomonadati</taxon>
        <taxon>Pseudomonadota</taxon>
        <taxon>Gammaproteobacteria</taxon>
        <taxon>Pseudomonadales</taxon>
        <taxon>Pseudomonadaceae</taxon>
        <taxon>Pseudomonas</taxon>
    </lineage>
</organism>
<keyword id="KW-0002">3D-structure</keyword>
<keyword id="KW-0032">Aminotransferase</keyword>
<keyword id="KW-0903">Direct protein sequencing</keyword>
<keyword id="KW-0663">Pyridoxal phosphate</keyword>
<keyword id="KW-0808">Transferase</keyword>
<comment type="function">
    <text evidence="4">Catalyzes transamination between a variety of omega-amino acids, mono and diamines, and pyruvate. Plays a pivotal role in the metabolism of the omega amino acids.</text>
</comment>
<comment type="catalytic activity">
    <reaction>
        <text>3-oxopropanoate + L-alanine = beta-alanine + pyruvate</text>
        <dbReference type="Rhea" id="RHEA:14077"/>
        <dbReference type="ChEBI" id="CHEBI:15361"/>
        <dbReference type="ChEBI" id="CHEBI:33190"/>
        <dbReference type="ChEBI" id="CHEBI:57966"/>
        <dbReference type="ChEBI" id="CHEBI:57972"/>
        <dbReference type="EC" id="2.6.1.18"/>
    </reaction>
</comment>
<comment type="cofactor">
    <cofactor evidence="3 4">
        <name>pyridoxal 5'-phosphate</name>
        <dbReference type="ChEBI" id="CHEBI:597326"/>
    </cofactor>
</comment>
<comment type="subunit">
    <text evidence="2 3 4">Homotetramer.</text>
</comment>
<comment type="similarity">
    <text evidence="5">Belongs to the class-III pyridoxal-phosphate-dependent aminotransferase family.</text>
</comment>
<accession>P28269</accession>
<feature type="chain" id="PRO_0000120494" description="Omega-amino acid--pyruvate aminotransferase">
    <location>
        <begin position="1"/>
        <end position="449"/>
    </location>
</feature>
<feature type="binding site" evidence="1">
    <location>
        <position position="60"/>
    </location>
    <ligand>
        <name>substrate</name>
    </ligand>
</feature>
<feature type="binding site">
    <location>
        <begin position="119"/>
        <end position="120"/>
    </location>
    <ligand>
        <name>pyridoxal 5'-phosphate</name>
        <dbReference type="ChEBI" id="CHEBI:597326"/>
    </ligand>
</feature>
<feature type="binding site" evidence="1">
    <location>
        <position position="327"/>
    </location>
    <ligand>
        <name>pyridoxal 5'-phosphate</name>
        <dbReference type="ChEBI" id="CHEBI:597326"/>
    </ligand>
</feature>
<feature type="binding site" evidence="1">
    <location>
        <position position="414"/>
    </location>
    <ligand>
        <name>substrate</name>
    </ligand>
</feature>
<feature type="binding site" evidence="1">
    <location>
        <position position="421"/>
    </location>
    <ligand>
        <name>substrate</name>
    </ligand>
</feature>
<feature type="modified residue" description="N6-(pyridoxal phosphate)lysine">
    <location>
        <position position="288"/>
    </location>
</feature>
<feature type="helix" evidence="6">
    <location>
        <begin position="11"/>
        <end position="13"/>
    </location>
</feature>
<feature type="helix" evidence="6">
    <location>
        <begin position="16"/>
        <end position="18"/>
    </location>
</feature>
<feature type="helix" evidence="6">
    <location>
        <begin position="26"/>
        <end position="31"/>
    </location>
</feature>
<feature type="strand" evidence="6">
    <location>
        <begin position="36"/>
        <end position="41"/>
    </location>
</feature>
<feature type="strand" evidence="6">
    <location>
        <begin position="43"/>
        <end position="46"/>
    </location>
</feature>
<feature type="strand" evidence="6">
    <location>
        <begin position="51"/>
        <end position="54"/>
    </location>
</feature>
<feature type="helix" evidence="6">
    <location>
        <begin position="57"/>
        <end position="60"/>
    </location>
</feature>
<feature type="helix" evidence="6">
    <location>
        <begin position="69"/>
        <end position="78"/>
    </location>
</feature>
<feature type="turn" evidence="6">
    <location>
        <begin position="79"/>
        <end position="81"/>
    </location>
</feature>
<feature type="strand" evidence="6">
    <location>
        <begin position="87"/>
        <end position="89"/>
    </location>
</feature>
<feature type="helix" evidence="6">
    <location>
        <begin position="93"/>
        <end position="103"/>
    </location>
</feature>
<feature type="strand" evidence="6">
    <location>
        <begin position="110"/>
        <end position="118"/>
    </location>
</feature>
<feature type="helix" evidence="6">
    <location>
        <begin position="119"/>
        <end position="136"/>
    </location>
</feature>
<feature type="strand" evidence="6">
    <location>
        <begin position="144"/>
        <end position="148"/>
    </location>
</feature>
<feature type="helix" evidence="6">
    <location>
        <begin position="157"/>
        <end position="162"/>
    </location>
</feature>
<feature type="helix" evidence="6">
    <location>
        <begin position="166"/>
        <end position="169"/>
    </location>
</feature>
<feature type="turn" evidence="6">
    <location>
        <begin position="170"/>
        <end position="172"/>
    </location>
</feature>
<feature type="strand" evidence="6">
    <location>
        <begin position="178"/>
        <end position="182"/>
    </location>
</feature>
<feature type="helix" evidence="6">
    <location>
        <begin position="188"/>
        <end position="190"/>
    </location>
</feature>
<feature type="strand" evidence="6">
    <location>
        <begin position="194"/>
        <end position="196"/>
    </location>
</feature>
<feature type="strand" evidence="6">
    <location>
        <begin position="198"/>
        <end position="200"/>
    </location>
</feature>
<feature type="helix" evidence="6">
    <location>
        <begin position="201"/>
        <end position="215"/>
    </location>
</feature>
<feature type="helix" evidence="6">
    <location>
        <begin position="217"/>
        <end position="219"/>
    </location>
</feature>
<feature type="strand" evidence="6">
    <location>
        <begin position="220"/>
        <end position="225"/>
    </location>
</feature>
<feature type="strand" evidence="6">
    <location>
        <begin position="227"/>
        <end position="229"/>
    </location>
</feature>
<feature type="turn" evidence="6">
    <location>
        <begin position="230"/>
        <end position="233"/>
    </location>
</feature>
<feature type="helix" evidence="6">
    <location>
        <begin position="241"/>
        <end position="252"/>
    </location>
</feature>
<feature type="strand" evidence="6">
    <location>
        <begin position="255"/>
        <end position="259"/>
    </location>
</feature>
<feature type="turn" evidence="6">
    <location>
        <begin position="261"/>
        <end position="268"/>
    </location>
</feature>
<feature type="strand" evidence="6">
    <location>
        <begin position="269"/>
        <end position="272"/>
    </location>
</feature>
<feature type="helix" evidence="6">
    <location>
        <begin position="273"/>
        <end position="277"/>
    </location>
</feature>
<feature type="strand" evidence="6">
    <location>
        <begin position="282"/>
        <end position="286"/>
    </location>
</feature>
<feature type="helix" evidence="6">
    <location>
        <begin position="288"/>
        <end position="291"/>
    </location>
</feature>
<feature type="strand" evidence="6">
    <location>
        <begin position="298"/>
        <end position="303"/>
    </location>
</feature>
<feature type="helix" evidence="6">
    <location>
        <begin position="304"/>
        <end position="311"/>
    </location>
</feature>
<feature type="turn" evidence="6">
    <location>
        <begin position="327"/>
        <end position="330"/>
    </location>
</feature>
<feature type="helix" evidence="6">
    <location>
        <begin position="332"/>
        <end position="347"/>
    </location>
</feature>
<feature type="helix" evidence="6">
    <location>
        <begin position="350"/>
        <end position="366"/>
    </location>
</feature>
<feature type="turn" evidence="6">
    <location>
        <begin position="367"/>
        <end position="370"/>
    </location>
</feature>
<feature type="strand" evidence="6">
    <location>
        <begin position="374"/>
        <end position="380"/>
    </location>
</feature>
<feature type="strand" evidence="6">
    <location>
        <begin position="383"/>
        <end position="388"/>
    </location>
</feature>
<feature type="strand" evidence="6">
    <location>
        <begin position="394"/>
        <end position="396"/>
    </location>
</feature>
<feature type="helix" evidence="6">
    <location>
        <begin position="397"/>
        <end position="409"/>
    </location>
</feature>
<feature type="strand" evidence="6">
    <location>
        <begin position="414"/>
        <end position="416"/>
    </location>
</feature>
<feature type="strand" evidence="6">
    <location>
        <begin position="419"/>
        <end position="422"/>
    </location>
</feature>
<feature type="helix" evidence="6">
    <location>
        <begin position="430"/>
        <end position="446"/>
    </location>
</feature>
<protein>
    <recommendedName>
        <fullName>Omega-amino acid--pyruvate aminotransferase</fullName>
        <shortName>Omega-APT</shortName>
        <ecNumber>2.6.1.18</ecNumber>
    </recommendedName>
    <alternativeName>
        <fullName>Beta-alanine--pyruvate aminotransferase</fullName>
    </alternativeName>
</protein>
<dbReference type="EC" id="2.6.1.18"/>
<dbReference type="PIR" id="A42800">
    <property type="entry name" value="A42800"/>
</dbReference>
<dbReference type="PDB" id="3A8U">
    <property type="method" value="X-ray"/>
    <property type="resolution" value="1.40 A"/>
    <property type="chains" value="X=1-449"/>
</dbReference>
<dbReference type="PDBsum" id="3A8U"/>
<dbReference type="SMR" id="P28269"/>
<dbReference type="EvolutionaryTrace" id="P28269"/>
<dbReference type="GO" id="GO:0004015">
    <property type="term" value="F:adenosylmethionine-8-amino-7-oxononanoate transaminase activity"/>
    <property type="evidence" value="ECO:0007669"/>
    <property type="project" value="TreeGrafter"/>
</dbReference>
<dbReference type="GO" id="GO:0016223">
    <property type="term" value="F:beta-alanine:pyruvate transaminase activity"/>
    <property type="evidence" value="ECO:0007669"/>
    <property type="project" value="UniProtKB-EC"/>
</dbReference>
<dbReference type="GO" id="GO:0030170">
    <property type="term" value="F:pyridoxal phosphate binding"/>
    <property type="evidence" value="ECO:0007669"/>
    <property type="project" value="InterPro"/>
</dbReference>
<dbReference type="GO" id="GO:0009102">
    <property type="term" value="P:biotin biosynthetic process"/>
    <property type="evidence" value="ECO:0007669"/>
    <property type="project" value="TreeGrafter"/>
</dbReference>
<dbReference type="CDD" id="cd00610">
    <property type="entry name" value="OAT_like"/>
    <property type="match status" value="1"/>
</dbReference>
<dbReference type="FunFam" id="3.40.640.10:FF:000014">
    <property type="entry name" value="Adenosylmethionine-8-amino-7-oxononanoate aminotransferase, probable"/>
    <property type="match status" value="1"/>
</dbReference>
<dbReference type="Gene3D" id="3.90.1150.10">
    <property type="entry name" value="Aspartate Aminotransferase, domain 1"/>
    <property type="match status" value="1"/>
</dbReference>
<dbReference type="Gene3D" id="3.40.640.10">
    <property type="entry name" value="Type I PLP-dependent aspartate aminotransferase-like (Major domain)"/>
    <property type="match status" value="1"/>
</dbReference>
<dbReference type="InterPro" id="IPR005814">
    <property type="entry name" value="Aminotrans_3"/>
</dbReference>
<dbReference type="InterPro" id="IPR049704">
    <property type="entry name" value="Aminotrans_3_PPA_site"/>
</dbReference>
<dbReference type="InterPro" id="IPR015424">
    <property type="entry name" value="PyrdxlP-dep_Trfase"/>
</dbReference>
<dbReference type="InterPro" id="IPR015421">
    <property type="entry name" value="PyrdxlP-dep_Trfase_major"/>
</dbReference>
<dbReference type="InterPro" id="IPR015422">
    <property type="entry name" value="PyrdxlP-dep_Trfase_small"/>
</dbReference>
<dbReference type="PANTHER" id="PTHR42684">
    <property type="entry name" value="ADENOSYLMETHIONINE-8-AMINO-7-OXONONANOATE AMINOTRANSFERASE"/>
    <property type="match status" value="1"/>
</dbReference>
<dbReference type="PANTHER" id="PTHR42684:SF1">
    <property type="entry name" value="BETA-ALANINE--PYRUVATE AMINOTRANSFERASE"/>
    <property type="match status" value="1"/>
</dbReference>
<dbReference type="Pfam" id="PF00202">
    <property type="entry name" value="Aminotran_3"/>
    <property type="match status" value="1"/>
</dbReference>
<dbReference type="PIRSF" id="PIRSF000521">
    <property type="entry name" value="Transaminase_4ab_Lys_Orn"/>
    <property type="match status" value="1"/>
</dbReference>
<dbReference type="SUPFAM" id="SSF53383">
    <property type="entry name" value="PLP-dependent transferases"/>
    <property type="match status" value="1"/>
</dbReference>
<dbReference type="PROSITE" id="PS00600">
    <property type="entry name" value="AA_TRANSFER_CLASS_3"/>
    <property type="match status" value="1"/>
</dbReference>
<proteinExistence type="evidence at protein level"/>
<name>OAPT_PSEPU</name>
<evidence type="ECO:0000250" key="1"/>
<evidence type="ECO:0000269" key="2">
    <source>
    </source>
</evidence>
<evidence type="ECO:0000269" key="3">
    <source>
    </source>
</evidence>
<evidence type="ECO:0000269" key="4">
    <source>
    </source>
</evidence>
<evidence type="ECO:0000305" key="5"/>
<evidence type="ECO:0007829" key="6">
    <source>
        <dbReference type="PDB" id="3A8U"/>
    </source>
</evidence>